<sequence>MPGITREEVAHLARLARLELKGEELDHFAGQLDDIIGAVARVSEVADQDVPPTSHPLPLTNVMRADEVRPSLTPAQALSGAPAQEQQRFKVPQILGED</sequence>
<reference key="1">
    <citation type="journal article" date="2008" name="J. Bacteriol.">
        <title>Genome sequence of the streptomycin-producing microorganism Streptomyces griseus IFO 13350.</title>
        <authorList>
            <person name="Ohnishi Y."/>
            <person name="Ishikawa J."/>
            <person name="Hara H."/>
            <person name="Suzuki H."/>
            <person name="Ikenoya M."/>
            <person name="Ikeda H."/>
            <person name="Yamashita A."/>
            <person name="Hattori M."/>
            <person name="Horinouchi S."/>
        </authorList>
    </citation>
    <scope>NUCLEOTIDE SEQUENCE [LARGE SCALE GENOMIC DNA]</scope>
    <source>
        <strain>JCM 4626 / CBS 651.72 / NBRC 13350 / KCC S-0626 / ISP 5235</strain>
    </source>
</reference>
<organism>
    <name type="scientific">Streptomyces griseus subsp. griseus (strain JCM 4626 / CBS 651.72 / NBRC 13350 / KCC S-0626 / ISP 5235)</name>
    <dbReference type="NCBI Taxonomy" id="455632"/>
    <lineage>
        <taxon>Bacteria</taxon>
        <taxon>Bacillati</taxon>
        <taxon>Actinomycetota</taxon>
        <taxon>Actinomycetes</taxon>
        <taxon>Kitasatosporales</taxon>
        <taxon>Streptomycetaceae</taxon>
        <taxon>Streptomyces</taxon>
    </lineage>
</organism>
<keyword id="KW-0067">ATP-binding</keyword>
<keyword id="KW-0436">Ligase</keyword>
<keyword id="KW-0547">Nucleotide-binding</keyword>
<keyword id="KW-0648">Protein biosynthesis</keyword>
<name>GATC_STRGG</name>
<comment type="function">
    <text evidence="1">Allows the formation of correctly charged Asn-tRNA(Asn) or Gln-tRNA(Gln) through the transamidation of misacylated Asp-tRNA(Asn) or Glu-tRNA(Gln) in organisms which lack either or both of asparaginyl-tRNA or glutaminyl-tRNA synthetases. The reaction takes place in the presence of glutamine and ATP through an activated phospho-Asp-tRNA(Asn) or phospho-Glu-tRNA(Gln).</text>
</comment>
<comment type="catalytic activity">
    <reaction evidence="1">
        <text>L-glutamyl-tRNA(Gln) + L-glutamine + ATP + H2O = L-glutaminyl-tRNA(Gln) + L-glutamate + ADP + phosphate + H(+)</text>
        <dbReference type="Rhea" id="RHEA:17521"/>
        <dbReference type="Rhea" id="RHEA-COMP:9681"/>
        <dbReference type="Rhea" id="RHEA-COMP:9684"/>
        <dbReference type="ChEBI" id="CHEBI:15377"/>
        <dbReference type="ChEBI" id="CHEBI:15378"/>
        <dbReference type="ChEBI" id="CHEBI:29985"/>
        <dbReference type="ChEBI" id="CHEBI:30616"/>
        <dbReference type="ChEBI" id="CHEBI:43474"/>
        <dbReference type="ChEBI" id="CHEBI:58359"/>
        <dbReference type="ChEBI" id="CHEBI:78520"/>
        <dbReference type="ChEBI" id="CHEBI:78521"/>
        <dbReference type="ChEBI" id="CHEBI:456216"/>
    </reaction>
</comment>
<comment type="catalytic activity">
    <reaction evidence="1">
        <text>L-aspartyl-tRNA(Asn) + L-glutamine + ATP + H2O = L-asparaginyl-tRNA(Asn) + L-glutamate + ADP + phosphate + 2 H(+)</text>
        <dbReference type="Rhea" id="RHEA:14513"/>
        <dbReference type="Rhea" id="RHEA-COMP:9674"/>
        <dbReference type="Rhea" id="RHEA-COMP:9677"/>
        <dbReference type="ChEBI" id="CHEBI:15377"/>
        <dbReference type="ChEBI" id="CHEBI:15378"/>
        <dbReference type="ChEBI" id="CHEBI:29985"/>
        <dbReference type="ChEBI" id="CHEBI:30616"/>
        <dbReference type="ChEBI" id="CHEBI:43474"/>
        <dbReference type="ChEBI" id="CHEBI:58359"/>
        <dbReference type="ChEBI" id="CHEBI:78515"/>
        <dbReference type="ChEBI" id="CHEBI:78516"/>
        <dbReference type="ChEBI" id="CHEBI:456216"/>
    </reaction>
</comment>
<comment type="subunit">
    <text evidence="1">Heterotrimer of A, B and C subunits.</text>
</comment>
<comment type="similarity">
    <text evidence="1">Belongs to the GatC family.</text>
</comment>
<proteinExistence type="inferred from homology"/>
<feature type="chain" id="PRO_1000095315" description="Aspartyl/glutamyl-tRNA(Asn/Gln) amidotransferase subunit C">
    <location>
        <begin position="1"/>
        <end position="98"/>
    </location>
</feature>
<feature type="region of interest" description="Disordered" evidence="2">
    <location>
        <begin position="75"/>
        <end position="98"/>
    </location>
</feature>
<gene>
    <name evidence="1" type="primary">gatC</name>
    <name type="ordered locus">SGR_2019</name>
</gene>
<evidence type="ECO:0000255" key="1">
    <source>
        <dbReference type="HAMAP-Rule" id="MF_00122"/>
    </source>
</evidence>
<evidence type="ECO:0000256" key="2">
    <source>
        <dbReference type="SAM" id="MobiDB-lite"/>
    </source>
</evidence>
<protein>
    <recommendedName>
        <fullName evidence="1">Aspartyl/glutamyl-tRNA(Asn/Gln) amidotransferase subunit C</fullName>
        <shortName evidence="1">Asp/Glu-ADT subunit C</shortName>
        <ecNumber evidence="1">6.3.5.-</ecNumber>
    </recommendedName>
</protein>
<accession>B1VZV9</accession>
<dbReference type="EC" id="6.3.5.-" evidence="1"/>
<dbReference type="EMBL" id="AP009493">
    <property type="protein sequence ID" value="BAG18848.1"/>
    <property type="molecule type" value="Genomic_DNA"/>
</dbReference>
<dbReference type="RefSeq" id="WP_003966094.1">
    <property type="nucleotide sequence ID" value="NC_010572.1"/>
</dbReference>
<dbReference type="SMR" id="B1VZV9"/>
<dbReference type="GeneID" id="97404148"/>
<dbReference type="KEGG" id="sgr:SGR_2019"/>
<dbReference type="eggNOG" id="COG0721">
    <property type="taxonomic scope" value="Bacteria"/>
</dbReference>
<dbReference type="HOGENOM" id="CLU_105899_1_0_11"/>
<dbReference type="Proteomes" id="UP000001685">
    <property type="component" value="Chromosome"/>
</dbReference>
<dbReference type="GO" id="GO:0050566">
    <property type="term" value="F:asparaginyl-tRNA synthase (glutamine-hydrolyzing) activity"/>
    <property type="evidence" value="ECO:0007669"/>
    <property type="project" value="RHEA"/>
</dbReference>
<dbReference type="GO" id="GO:0005524">
    <property type="term" value="F:ATP binding"/>
    <property type="evidence" value="ECO:0007669"/>
    <property type="project" value="UniProtKB-KW"/>
</dbReference>
<dbReference type="GO" id="GO:0050567">
    <property type="term" value="F:glutaminyl-tRNA synthase (glutamine-hydrolyzing) activity"/>
    <property type="evidence" value="ECO:0007669"/>
    <property type="project" value="UniProtKB-UniRule"/>
</dbReference>
<dbReference type="GO" id="GO:0070681">
    <property type="term" value="P:glutaminyl-tRNAGln biosynthesis via transamidation"/>
    <property type="evidence" value="ECO:0007669"/>
    <property type="project" value="TreeGrafter"/>
</dbReference>
<dbReference type="GO" id="GO:0006450">
    <property type="term" value="P:regulation of translational fidelity"/>
    <property type="evidence" value="ECO:0007669"/>
    <property type="project" value="InterPro"/>
</dbReference>
<dbReference type="GO" id="GO:0006412">
    <property type="term" value="P:translation"/>
    <property type="evidence" value="ECO:0007669"/>
    <property type="project" value="UniProtKB-UniRule"/>
</dbReference>
<dbReference type="Gene3D" id="1.10.20.60">
    <property type="entry name" value="Glu-tRNAGln amidotransferase C subunit, N-terminal domain"/>
    <property type="match status" value="1"/>
</dbReference>
<dbReference type="HAMAP" id="MF_00122">
    <property type="entry name" value="GatC"/>
    <property type="match status" value="1"/>
</dbReference>
<dbReference type="InterPro" id="IPR036113">
    <property type="entry name" value="Asp/Glu-ADT_sf_sub_c"/>
</dbReference>
<dbReference type="InterPro" id="IPR003837">
    <property type="entry name" value="GatC"/>
</dbReference>
<dbReference type="NCBIfam" id="TIGR00135">
    <property type="entry name" value="gatC"/>
    <property type="match status" value="1"/>
</dbReference>
<dbReference type="PANTHER" id="PTHR15004">
    <property type="entry name" value="GLUTAMYL-TRNA(GLN) AMIDOTRANSFERASE SUBUNIT C, MITOCHONDRIAL"/>
    <property type="match status" value="1"/>
</dbReference>
<dbReference type="PANTHER" id="PTHR15004:SF0">
    <property type="entry name" value="GLUTAMYL-TRNA(GLN) AMIDOTRANSFERASE SUBUNIT C, MITOCHONDRIAL"/>
    <property type="match status" value="1"/>
</dbReference>
<dbReference type="Pfam" id="PF02686">
    <property type="entry name" value="GatC"/>
    <property type="match status" value="1"/>
</dbReference>
<dbReference type="SUPFAM" id="SSF141000">
    <property type="entry name" value="Glu-tRNAGln amidotransferase C subunit"/>
    <property type="match status" value="1"/>
</dbReference>